<gene>
    <name evidence="1" type="primary">rpsF</name>
    <name type="ordered locus">YPO3539</name>
    <name type="ordered locus">y0645</name>
    <name type="ordered locus">YP_0542</name>
</gene>
<comment type="function">
    <text evidence="1">Binds together with bS18 to 16S ribosomal RNA.</text>
</comment>
<comment type="similarity">
    <text evidence="1">Belongs to the bacterial ribosomal protein bS6 family.</text>
</comment>
<proteinExistence type="inferred from homology"/>
<accession>Q8ZB81</accession>
<accession>Q0WBB0</accession>
<evidence type="ECO:0000255" key="1">
    <source>
        <dbReference type="HAMAP-Rule" id="MF_00360"/>
    </source>
</evidence>
<evidence type="ECO:0000256" key="2">
    <source>
        <dbReference type="SAM" id="MobiDB-lite"/>
    </source>
</evidence>
<evidence type="ECO:0000305" key="3"/>
<name>RS6_YERPE</name>
<reference key="1">
    <citation type="journal article" date="2001" name="Nature">
        <title>Genome sequence of Yersinia pestis, the causative agent of plague.</title>
        <authorList>
            <person name="Parkhill J."/>
            <person name="Wren B.W."/>
            <person name="Thomson N.R."/>
            <person name="Titball R.W."/>
            <person name="Holden M.T.G."/>
            <person name="Prentice M.B."/>
            <person name="Sebaihia M."/>
            <person name="James K.D."/>
            <person name="Churcher C.M."/>
            <person name="Mungall K.L."/>
            <person name="Baker S."/>
            <person name="Basham D."/>
            <person name="Bentley S.D."/>
            <person name="Brooks K."/>
            <person name="Cerdeno-Tarraga A.-M."/>
            <person name="Chillingworth T."/>
            <person name="Cronin A."/>
            <person name="Davies R.M."/>
            <person name="Davis P."/>
            <person name="Dougan G."/>
            <person name="Feltwell T."/>
            <person name="Hamlin N."/>
            <person name="Holroyd S."/>
            <person name="Jagels K."/>
            <person name="Karlyshev A.V."/>
            <person name="Leather S."/>
            <person name="Moule S."/>
            <person name="Oyston P.C.F."/>
            <person name="Quail M.A."/>
            <person name="Rutherford K.M."/>
            <person name="Simmonds M."/>
            <person name="Skelton J."/>
            <person name="Stevens K."/>
            <person name="Whitehead S."/>
            <person name="Barrell B.G."/>
        </authorList>
    </citation>
    <scope>NUCLEOTIDE SEQUENCE [LARGE SCALE GENOMIC DNA]</scope>
    <source>
        <strain>CO-92 / Biovar Orientalis</strain>
    </source>
</reference>
<reference key="2">
    <citation type="journal article" date="2002" name="J. Bacteriol.">
        <title>Genome sequence of Yersinia pestis KIM.</title>
        <authorList>
            <person name="Deng W."/>
            <person name="Burland V."/>
            <person name="Plunkett G. III"/>
            <person name="Boutin A."/>
            <person name="Mayhew G.F."/>
            <person name="Liss P."/>
            <person name="Perna N.T."/>
            <person name="Rose D.J."/>
            <person name="Mau B."/>
            <person name="Zhou S."/>
            <person name="Schwartz D.C."/>
            <person name="Fetherston J.D."/>
            <person name="Lindler L.E."/>
            <person name="Brubaker R.R."/>
            <person name="Plano G.V."/>
            <person name="Straley S.C."/>
            <person name="McDonough K.A."/>
            <person name="Nilles M.L."/>
            <person name="Matson J.S."/>
            <person name="Blattner F.R."/>
            <person name="Perry R.D."/>
        </authorList>
    </citation>
    <scope>NUCLEOTIDE SEQUENCE [LARGE SCALE GENOMIC DNA]</scope>
    <source>
        <strain>KIM10+ / Biovar Mediaevalis</strain>
    </source>
</reference>
<reference key="3">
    <citation type="journal article" date="2004" name="DNA Res.">
        <title>Complete genome sequence of Yersinia pestis strain 91001, an isolate avirulent to humans.</title>
        <authorList>
            <person name="Song Y."/>
            <person name="Tong Z."/>
            <person name="Wang J."/>
            <person name="Wang L."/>
            <person name="Guo Z."/>
            <person name="Han Y."/>
            <person name="Zhang J."/>
            <person name="Pei D."/>
            <person name="Zhou D."/>
            <person name="Qin H."/>
            <person name="Pang X."/>
            <person name="Han Y."/>
            <person name="Zhai J."/>
            <person name="Li M."/>
            <person name="Cui B."/>
            <person name="Qi Z."/>
            <person name="Jin L."/>
            <person name="Dai R."/>
            <person name="Chen F."/>
            <person name="Li S."/>
            <person name="Ye C."/>
            <person name="Du Z."/>
            <person name="Lin W."/>
            <person name="Wang J."/>
            <person name="Yu J."/>
            <person name="Yang H."/>
            <person name="Wang J."/>
            <person name="Huang P."/>
            <person name="Yang R."/>
        </authorList>
    </citation>
    <scope>NUCLEOTIDE SEQUENCE [LARGE SCALE GENOMIC DNA]</scope>
    <source>
        <strain>91001 / Biovar Mediaevalis</strain>
    </source>
</reference>
<organism>
    <name type="scientific">Yersinia pestis</name>
    <dbReference type="NCBI Taxonomy" id="632"/>
    <lineage>
        <taxon>Bacteria</taxon>
        <taxon>Pseudomonadati</taxon>
        <taxon>Pseudomonadota</taxon>
        <taxon>Gammaproteobacteria</taxon>
        <taxon>Enterobacterales</taxon>
        <taxon>Yersiniaceae</taxon>
        <taxon>Yersinia</taxon>
    </lineage>
</organism>
<dbReference type="EMBL" id="AL590842">
    <property type="protein sequence ID" value="CAL22127.1"/>
    <property type="molecule type" value="Genomic_DNA"/>
</dbReference>
<dbReference type="EMBL" id="AE009952">
    <property type="protein sequence ID" value="AAM84233.1"/>
    <property type="molecule type" value="Genomic_DNA"/>
</dbReference>
<dbReference type="EMBL" id="AE017042">
    <property type="protein sequence ID" value="AAS60812.1"/>
    <property type="molecule type" value="Genomic_DNA"/>
</dbReference>
<dbReference type="PIR" id="AD0430">
    <property type="entry name" value="AD0430"/>
</dbReference>
<dbReference type="RefSeq" id="WP_002210153.1">
    <property type="nucleotide sequence ID" value="NZ_WUCM01000155.1"/>
</dbReference>
<dbReference type="RefSeq" id="YP_002348428.1">
    <property type="nucleotide sequence ID" value="NC_003143.1"/>
</dbReference>
<dbReference type="SMR" id="Q8ZB81"/>
<dbReference type="STRING" id="214092.YPO3539"/>
<dbReference type="PaxDb" id="214092-YPO3539"/>
<dbReference type="DNASU" id="1145592"/>
<dbReference type="EnsemblBacteria" id="AAS60812">
    <property type="protein sequence ID" value="AAS60812"/>
    <property type="gene ID" value="YP_0542"/>
</dbReference>
<dbReference type="GeneID" id="97457911"/>
<dbReference type="KEGG" id="ype:YPO3539"/>
<dbReference type="KEGG" id="ypk:y0645"/>
<dbReference type="KEGG" id="ypm:YP_0542"/>
<dbReference type="PATRIC" id="fig|214092.21.peg.4034"/>
<dbReference type="eggNOG" id="COG0360">
    <property type="taxonomic scope" value="Bacteria"/>
</dbReference>
<dbReference type="HOGENOM" id="CLU_113441_6_1_6"/>
<dbReference type="OMA" id="AYPIQHK"/>
<dbReference type="OrthoDB" id="9812702at2"/>
<dbReference type="Proteomes" id="UP000000815">
    <property type="component" value="Chromosome"/>
</dbReference>
<dbReference type="Proteomes" id="UP000001019">
    <property type="component" value="Chromosome"/>
</dbReference>
<dbReference type="Proteomes" id="UP000002490">
    <property type="component" value="Chromosome"/>
</dbReference>
<dbReference type="GO" id="GO:0022627">
    <property type="term" value="C:cytosolic small ribosomal subunit"/>
    <property type="evidence" value="ECO:0000318"/>
    <property type="project" value="GO_Central"/>
</dbReference>
<dbReference type="GO" id="GO:0070181">
    <property type="term" value="F:small ribosomal subunit rRNA binding"/>
    <property type="evidence" value="ECO:0000318"/>
    <property type="project" value="GO_Central"/>
</dbReference>
<dbReference type="GO" id="GO:0003735">
    <property type="term" value="F:structural constituent of ribosome"/>
    <property type="evidence" value="ECO:0000318"/>
    <property type="project" value="GO_Central"/>
</dbReference>
<dbReference type="GO" id="GO:0006412">
    <property type="term" value="P:translation"/>
    <property type="evidence" value="ECO:0007669"/>
    <property type="project" value="UniProtKB-UniRule"/>
</dbReference>
<dbReference type="CDD" id="cd00473">
    <property type="entry name" value="bS6"/>
    <property type="match status" value="1"/>
</dbReference>
<dbReference type="FunFam" id="3.30.70.60:FF:000003">
    <property type="entry name" value="30S ribosomal protein S6"/>
    <property type="match status" value="1"/>
</dbReference>
<dbReference type="Gene3D" id="3.30.70.60">
    <property type="match status" value="1"/>
</dbReference>
<dbReference type="HAMAP" id="MF_00360">
    <property type="entry name" value="Ribosomal_bS6"/>
    <property type="match status" value="1"/>
</dbReference>
<dbReference type="InterPro" id="IPR000529">
    <property type="entry name" value="Ribosomal_bS6"/>
</dbReference>
<dbReference type="InterPro" id="IPR020815">
    <property type="entry name" value="Ribosomal_bS6_CS"/>
</dbReference>
<dbReference type="InterPro" id="IPR035980">
    <property type="entry name" value="Ribosomal_bS6_sf"/>
</dbReference>
<dbReference type="InterPro" id="IPR020814">
    <property type="entry name" value="Ribosomal_S6_plastid/chlpt"/>
</dbReference>
<dbReference type="InterPro" id="IPR014717">
    <property type="entry name" value="Transl_elong_EF1B/ribsomal_bS6"/>
</dbReference>
<dbReference type="NCBIfam" id="TIGR00166">
    <property type="entry name" value="S6"/>
    <property type="match status" value="1"/>
</dbReference>
<dbReference type="PANTHER" id="PTHR21011">
    <property type="entry name" value="MITOCHONDRIAL 28S RIBOSOMAL PROTEIN S6"/>
    <property type="match status" value="1"/>
</dbReference>
<dbReference type="PANTHER" id="PTHR21011:SF1">
    <property type="entry name" value="SMALL RIBOSOMAL SUBUNIT PROTEIN BS6M"/>
    <property type="match status" value="1"/>
</dbReference>
<dbReference type="Pfam" id="PF01250">
    <property type="entry name" value="Ribosomal_S6"/>
    <property type="match status" value="1"/>
</dbReference>
<dbReference type="SUPFAM" id="SSF54995">
    <property type="entry name" value="Ribosomal protein S6"/>
    <property type="match status" value="1"/>
</dbReference>
<dbReference type="PROSITE" id="PS01048">
    <property type="entry name" value="RIBOSOMAL_S6"/>
    <property type="match status" value="1"/>
</dbReference>
<protein>
    <recommendedName>
        <fullName evidence="1">Small ribosomal subunit protein bS6</fullName>
    </recommendedName>
    <alternativeName>
        <fullName evidence="3">30S ribosomal protein S6</fullName>
    </alternativeName>
</protein>
<feature type="chain" id="PRO_0000176881" description="Small ribosomal subunit protein bS6">
    <location>
        <begin position="1"/>
        <end position="130"/>
    </location>
</feature>
<feature type="region of interest" description="Disordered" evidence="2">
    <location>
        <begin position="99"/>
        <end position="130"/>
    </location>
</feature>
<feature type="compositionally biased region" description="Basic and acidic residues" evidence="2">
    <location>
        <begin position="104"/>
        <end position="116"/>
    </location>
</feature>
<feature type="compositionally biased region" description="Acidic residues" evidence="2">
    <location>
        <begin position="119"/>
        <end position="130"/>
    </location>
</feature>
<keyword id="KW-1185">Reference proteome</keyword>
<keyword id="KW-0687">Ribonucleoprotein</keyword>
<keyword id="KW-0689">Ribosomal protein</keyword>
<keyword id="KW-0694">RNA-binding</keyword>
<keyword id="KW-0699">rRNA-binding</keyword>
<sequence length="130" mass="15008">MRHYEIVFMVHPDQSEQVPGMIERYSATITNAAGTIHRLEDWGRRQLAYPINKLHKAHYVLLNVEAPQEAIDELETNFRFNDAVIRSMVMRVKHAVTEASPMVKAKDERRERHDFASEANDDSEAGDSEE</sequence>